<evidence type="ECO:0000256" key="1">
    <source>
        <dbReference type="SAM" id="MobiDB-lite"/>
    </source>
</evidence>
<evidence type="ECO:0007829" key="2">
    <source>
        <dbReference type="PDB" id="4DVZ"/>
    </source>
</evidence>
<evidence type="ECO:0007829" key="3">
    <source>
        <dbReference type="PDB" id="4IRV"/>
    </source>
</evidence>
<protein>
    <recommendedName>
        <fullName>Cytotoxicity-associated immunodominant antigen</fullName>
    </recommendedName>
    <alternativeName>
        <fullName>120 kDa protein</fullName>
    </alternativeName>
    <alternativeName>
        <fullName>CAG pathogenicity island protein 26</fullName>
    </alternativeName>
</protein>
<dbReference type="EMBL" id="AE000511">
    <property type="protein sequence ID" value="AAD07614.1"/>
    <property type="molecule type" value="Genomic_DNA"/>
</dbReference>
<dbReference type="PIR" id="C64588">
    <property type="entry name" value="C64588"/>
</dbReference>
<dbReference type="RefSeq" id="NP_207343.1">
    <property type="nucleotide sequence ID" value="NC_000915.1"/>
</dbReference>
<dbReference type="RefSeq" id="WP_000180747.1">
    <property type="nucleotide sequence ID" value="NC_018939.1"/>
</dbReference>
<dbReference type="PDB" id="3IEC">
    <property type="method" value="X-ray"/>
    <property type="resolution" value="2.20 A"/>
    <property type="chains" value="E/F/G/H=885-1005"/>
</dbReference>
<dbReference type="PDB" id="4DVY">
    <property type="method" value="X-ray"/>
    <property type="resolution" value="3.30 A"/>
    <property type="chains" value="P=1-876"/>
</dbReference>
<dbReference type="PDB" id="4DVZ">
    <property type="method" value="X-ray"/>
    <property type="resolution" value="3.19 A"/>
    <property type="chains" value="A=261-829"/>
</dbReference>
<dbReference type="PDB" id="4G0H">
    <property type="method" value="X-ray"/>
    <property type="resolution" value="3.60 A"/>
    <property type="chains" value="A=1-884"/>
</dbReference>
<dbReference type="PDB" id="4IRV">
    <property type="method" value="X-ray"/>
    <property type="resolution" value="2.04 A"/>
    <property type="chains" value="A/B/C/D=19-235"/>
</dbReference>
<dbReference type="PDB" id="5X7B">
    <property type="method" value="X-ray"/>
    <property type="resolution" value="2.45 A"/>
    <property type="chains" value="L/N=966-978"/>
</dbReference>
<dbReference type="PDB" id="5X94">
    <property type="method" value="X-ray"/>
    <property type="resolution" value="2.60 A"/>
    <property type="chains" value="L/M/N/O=966-976"/>
</dbReference>
<dbReference type="PDBsum" id="3IEC"/>
<dbReference type="PDBsum" id="4DVY"/>
<dbReference type="PDBsum" id="4DVZ"/>
<dbReference type="PDBsum" id="4G0H"/>
<dbReference type="PDBsum" id="4IRV"/>
<dbReference type="PDBsum" id="5X7B"/>
<dbReference type="PDBsum" id="5X94"/>
<dbReference type="SMR" id="P55980"/>
<dbReference type="DIP" id="DIP-3093N"/>
<dbReference type="ELM" id="P55980"/>
<dbReference type="IntAct" id="P55980">
    <property type="interactions" value="19"/>
</dbReference>
<dbReference type="MINT" id="P55980"/>
<dbReference type="STRING" id="85962.HP_0547"/>
<dbReference type="PaxDb" id="85962-C694_02825"/>
<dbReference type="EnsemblBacteria" id="AAD07614">
    <property type="protein sequence ID" value="AAD07614"/>
    <property type="gene ID" value="HP_0547"/>
</dbReference>
<dbReference type="KEGG" id="heo:C694_02825"/>
<dbReference type="KEGG" id="hpy:HP_0547"/>
<dbReference type="PATRIC" id="fig|85962.47.peg.591"/>
<dbReference type="eggNOG" id="COG1842">
    <property type="taxonomic scope" value="Bacteria"/>
</dbReference>
<dbReference type="InParanoid" id="P55980"/>
<dbReference type="OrthoDB" id="403896at2"/>
<dbReference type="EvolutionaryTrace" id="P55980"/>
<dbReference type="PHI-base" id="PHI:7711"/>
<dbReference type="Proteomes" id="UP000000429">
    <property type="component" value="Chromosome"/>
</dbReference>
<dbReference type="GO" id="GO:0060090">
    <property type="term" value="F:molecular adaptor activity"/>
    <property type="evidence" value="ECO:0000353"/>
    <property type="project" value="DisProt"/>
</dbReference>
<dbReference type="GO" id="GO:0019534">
    <property type="term" value="F:toxin transmembrane transporter activity"/>
    <property type="evidence" value="ECO:0007669"/>
    <property type="project" value="InterPro"/>
</dbReference>
<dbReference type="GO" id="GO:0044071">
    <property type="term" value="P:symbiont-mediated perturbation of host cell cycle progression"/>
    <property type="evidence" value="ECO:0000304"/>
    <property type="project" value="SigSci"/>
</dbReference>
<dbReference type="DisProt" id="DP01475"/>
<dbReference type="Gene3D" id="1.10.357.130">
    <property type="match status" value="1"/>
</dbReference>
<dbReference type="Gene3D" id="1.20.120.1270">
    <property type="entry name" value="CagA exotoxin domain III"/>
    <property type="match status" value="4"/>
</dbReference>
<dbReference type="InterPro" id="IPR005169">
    <property type="entry name" value="CagA_C"/>
</dbReference>
<dbReference type="InterPro" id="IPR045157">
    <property type="entry name" value="CagA_N"/>
</dbReference>
<dbReference type="InterPro" id="IPR004355">
    <property type="entry name" value="IVSec_CagA"/>
</dbReference>
<dbReference type="NCBIfam" id="NF033422">
    <property type="entry name" value="onco_T4SS_CagA"/>
    <property type="match status" value="1"/>
</dbReference>
<dbReference type="Pfam" id="PF03507">
    <property type="entry name" value="CagA"/>
    <property type="match status" value="2"/>
</dbReference>
<dbReference type="Pfam" id="PF18971">
    <property type="entry name" value="CagA_N"/>
    <property type="match status" value="1"/>
</dbReference>
<dbReference type="PRINTS" id="PR01553">
    <property type="entry name" value="TYPE4SSCAGA"/>
</dbReference>
<accession>P55980</accession>
<feature type="chain" id="PRO_0000089279" description="Cytotoxicity-associated immunodominant antigen">
    <location>
        <begin position="1"/>
        <end position="1186"/>
    </location>
</feature>
<feature type="region of interest" description="Disordered" evidence="1">
    <location>
        <begin position="630"/>
        <end position="652"/>
    </location>
</feature>
<feature type="compositionally biased region" description="Basic and acidic residues" evidence="1">
    <location>
        <begin position="630"/>
        <end position="649"/>
    </location>
</feature>
<feature type="helix" evidence="3">
    <location>
        <begin position="25"/>
        <end position="44"/>
    </location>
</feature>
<feature type="helix" evidence="3">
    <location>
        <begin position="46"/>
        <end position="48"/>
    </location>
</feature>
<feature type="helix" evidence="3">
    <location>
        <begin position="49"/>
        <end position="79"/>
    </location>
</feature>
<feature type="helix" evidence="3">
    <location>
        <begin position="81"/>
        <end position="83"/>
    </location>
</feature>
<feature type="helix" evidence="3">
    <location>
        <begin position="84"/>
        <end position="101"/>
    </location>
</feature>
<feature type="helix" evidence="3">
    <location>
        <begin position="107"/>
        <end position="117"/>
    </location>
</feature>
<feature type="helix" evidence="3">
    <location>
        <begin position="119"/>
        <end position="130"/>
    </location>
</feature>
<feature type="helix" evidence="3">
    <location>
        <begin position="135"/>
        <end position="137"/>
    </location>
</feature>
<feature type="helix" evidence="3">
    <location>
        <begin position="140"/>
        <end position="149"/>
    </location>
</feature>
<feature type="strand" evidence="3">
    <location>
        <begin position="151"/>
        <end position="153"/>
    </location>
</feature>
<feature type="helix" evidence="3">
    <location>
        <begin position="158"/>
        <end position="182"/>
    </location>
</feature>
<feature type="helix" evidence="3">
    <location>
        <begin position="185"/>
        <end position="190"/>
    </location>
</feature>
<feature type="helix" evidence="3">
    <location>
        <begin position="192"/>
        <end position="201"/>
    </location>
</feature>
<feature type="helix" evidence="3">
    <location>
        <begin position="212"/>
        <end position="217"/>
    </location>
</feature>
<feature type="strand" evidence="2">
    <location>
        <begin position="310"/>
        <end position="313"/>
    </location>
</feature>
<feature type="strand" evidence="2">
    <location>
        <begin position="320"/>
        <end position="324"/>
    </location>
</feature>
<feature type="strand" evidence="2">
    <location>
        <begin position="336"/>
        <end position="343"/>
    </location>
</feature>
<feature type="strand" evidence="2">
    <location>
        <begin position="350"/>
        <end position="358"/>
    </location>
</feature>
<feature type="strand" evidence="2">
    <location>
        <begin position="363"/>
        <end position="367"/>
    </location>
</feature>
<feature type="helix" evidence="2">
    <location>
        <begin position="376"/>
        <end position="379"/>
    </location>
</feature>
<feature type="strand" evidence="2">
    <location>
        <begin position="381"/>
        <end position="383"/>
    </location>
</feature>
<feature type="turn" evidence="2">
    <location>
        <begin position="385"/>
        <end position="387"/>
    </location>
</feature>
<feature type="strand" evidence="2">
    <location>
        <begin position="390"/>
        <end position="392"/>
    </location>
</feature>
<feature type="helix" evidence="2">
    <location>
        <begin position="395"/>
        <end position="410"/>
    </location>
</feature>
<feature type="turn" evidence="2">
    <location>
        <begin position="411"/>
        <end position="413"/>
    </location>
</feature>
<feature type="helix" evidence="2">
    <location>
        <begin position="420"/>
        <end position="425"/>
    </location>
</feature>
<feature type="helix" evidence="2">
    <location>
        <begin position="427"/>
        <end position="435"/>
    </location>
</feature>
<feature type="helix" evidence="2">
    <location>
        <begin position="437"/>
        <end position="446"/>
    </location>
</feature>
<feature type="strand" evidence="2">
    <location>
        <begin position="447"/>
        <end position="452"/>
    </location>
</feature>
<feature type="strand" evidence="2">
    <location>
        <begin position="459"/>
        <end position="469"/>
    </location>
</feature>
<feature type="strand" evidence="2">
    <location>
        <begin position="471"/>
        <end position="477"/>
    </location>
</feature>
<feature type="strand" evidence="2">
    <location>
        <begin position="492"/>
        <end position="496"/>
    </location>
</feature>
<feature type="helix" evidence="2">
    <location>
        <begin position="498"/>
        <end position="501"/>
    </location>
</feature>
<feature type="strand" evidence="2">
    <location>
        <begin position="502"/>
        <end position="508"/>
    </location>
</feature>
<feature type="strand" evidence="2">
    <location>
        <begin position="538"/>
        <end position="543"/>
    </location>
</feature>
<feature type="turn" evidence="2">
    <location>
        <begin position="550"/>
        <end position="554"/>
    </location>
</feature>
<feature type="helix" evidence="2">
    <location>
        <begin position="556"/>
        <end position="567"/>
    </location>
</feature>
<feature type="helix" evidence="2">
    <location>
        <begin position="572"/>
        <end position="606"/>
    </location>
</feature>
<feature type="helix" evidence="2">
    <location>
        <begin position="610"/>
        <end position="638"/>
    </location>
</feature>
<feature type="helix" evidence="2">
    <location>
        <begin position="651"/>
        <end position="710"/>
    </location>
</feature>
<feature type="helix" evidence="2">
    <location>
        <begin position="720"/>
        <end position="734"/>
    </location>
</feature>
<feature type="helix" evidence="2">
    <location>
        <begin position="738"/>
        <end position="755"/>
    </location>
</feature>
<feature type="helix" evidence="2">
    <location>
        <begin position="763"/>
        <end position="802"/>
    </location>
</feature>
<feature type="helix" evidence="2">
    <location>
        <begin position="806"/>
        <end position="826"/>
    </location>
</feature>
<gene>
    <name type="primary">cagA</name>
    <name type="synonym">cag26</name>
    <name type="synonym">cai</name>
    <name type="ordered locus">HP_0547</name>
</gene>
<reference key="1">
    <citation type="journal article" date="1997" name="Nature">
        <title>The complete genome sequence of the gastric pathogen Helicobacter pylori.</title>
        <authorList>
            <person name="Tomb J.-F."/>
            <person name="White O."/>
            <person name="Kerlavage A.R."/>
            <person name="Clayton R.A."/>
            <person name="Sutton G.G."/>
            <person name="Fleischmann R.D."/>
            <person name="Ketchum K.A."/>
            <person name="Klenk H.-P."/>
            <person name="Gill S.R."/>
            <person name="Dougherty B.A."/>
            <person name="Nelson K.E."/>
            <person name="Quackenbush J."/>
            <person name="Zhou L."/>
            <person name="Kirkness E.F."/>
            <person name="Peterson S.N."/>
            <person name="Loftus B.J."/>
            <person name="Richardson D.L."/>
            <person name="Dodson R.J."/>
            <person name="Khalak H.G."/>
            <person name="Glodek A."/>
            <person name="McKenney K."/>
            <person name="FitzGerald L.M."/>
            <person name="Lee N."/>
            <person name="Adams M.D."/>
            <person name="Hickey E.K."/>
            <person name="Berg D.E."/>
            <person name="Gocayne J.D."/>
            <person name="Utterback T.R."/>
            <person name="Peterson J.D."/>
            <person name="Kelley J.M."/>
            <person name="Cotton M.D."/>
            <person name="Weidman J.F."/>
            <person name="Fujii C."/>
            <person name="Bowman C."/>
            <person name="Watthey L."/>
            <person name="Wallin E."/>
            <person name="Hayes W.S."/>
            <person name="Borodovsky M."/>
            <person name="Karp P.D."/>
            <person name="Smith H.O."/>
            <person name="Fraser C.M."/>
            <person name="Venter J.C."/>
        </authorList>
    </citation>
    <scope>NUCLEOTIDE SEQUENCE [LARGE SCALE GENOMIC DNA]</scope>
    <source>
        <strain>ATCC 700392 / 26695</strain>
    </source>
</reference>
<sequence>MTNETIDQTRTPDQTQSQTAFDPQQFINNLQVAFIKVDNVVASFDPDQKPIVDKNDRDNRQAFDGISQLREEYSNKAIKNPTKKNQYFSDFIDKSNDLINKDNLIDVESSTKSFQKFGDQRYQIFTSWVSHQKDPSKINTRSIRNFMENIIQPPIPDDKEKAEFLKSAKQSFAGIIIGNQIRTDQKFMGVFDESLKERQEAEKNGGPTGGDWLDIFLSFIFNKKQSSDVKEAINQEPVPHVQPDIATTTTDIQGLPPEARDLLDERGNFSKFTLGDMEMLDVEGVADIDPNYKFNQLLIHNNALSSVLMGSHNGIEPEKVSLLYAGNGGFGDKHDWNATVGYKDQQGNNVATLINVHMKNGSGLVIAGGEKGINNPSFYLYKEDQLTGSQRALSQEEIRNKVDFMEFLAQNNTKLDNLSEKEKEKFQNEIEDFQKDSKAYLDALGNDRIAFVSKKDTKHSALITEFNNGDLSYTLKDYGKKADKALDREKNVTLQGSLKHDGVMFVDYSNFKYTNASKNPNKGVGATNGVSHLEAGFNKVAVFNLPDLNNLAITSFVRRNLENKLTAKGLSLQEANKLIKDFLSSNKELAGKALNFNKAVAEAKSTGNYDEVKKAQKDLEKSLRKREHLEKEVEKKLESKSGNKNKMEAKAQANSQKDEIFALINKEANRDARAIAYTQNLKGIKRELSDKLEKISKDLKDFSKSFDEFKNGKNKDFSKAEETLKALKGSVKDLGINPEWISKVENLNAALNEFKNGKNKDFSKVTQAKSDLENSVKDVIINQKVTDKVDNLNQAVSVAKAMGDFSRVEQVLADLKNFSKEQLAQQAQKNEDFNTGKNSELYQSVKNSVNKTLVGNGLSGIEATALAKNFSDIKKELNEKFKNFNNNNNGLKNSTEPIYAKVNKKKTGQVASPEEPIYTQVAKKVNAKIDRLNQIASGLGGVGQAAGFPLKRHDKVDDLSKVGLSASPEPIYATIDDLGGPFPLKRHDKVDDLSKVGRSRNQELAQKIDNLNQAVSEAKAGFFGNLEQTIDKLKDSTKKNVMNLYVESAKKVPASLSAKLDNYAINSHTRINSNIQNGAINEKATGMLTQKNPEWLKLVNDKIVAHNVGSVSLSEYDKIGFNQKNMKDYSDSFKFSTKLNNAVKDIKSGFTHFLANAFSTGYYCLARENAEHGIKNVNTKGGFQKS</sequence>
<comment type="function">
    <text>May be necessary for the transcription, folding, export, or function of the cytotoxin.</text>
</comment>
<comment type="interaction">
    <interactant intactId="EBI-528104">
        <id>P55980</id>
    </interactant>
    <interactant intactId="EBI-528090">
        <id>P94842</id>
        <label>ybgC</label>
    </interactant>
    <organismsDiffer>false</organismsDiffer>
    <experiments>2</experiments>
</comment>
<comment type="interaction">
    <interactant intactId="EBI-528104">
        <id>P55980</id>
    </interactant>
    <interactant intactId="EBI-516560">
        <id>Q7KZI7</id>
        <label>MARK2</label>
    </interactant>
    <organismsDiffer>true</organismsDiffer>
    <experiments>4</experiments>
</comment>
<name>CAGA_HELPY</name>
<keyword id="KW-0002">3D-structure</keyword>
<keyword id="KW-1185">Reference proteome</keyword>
<proteinExistence type="evidence at protein level"/>
<organism>
    <name type="scientific">Helicobacter pylori (strain ATCC 700392 / 26695)</name>
    <name type="common">Campylobacter pylori</name>
    <dbReference type="NCBI Taxonomy" id="85962"/>
    <lineage>
        <taxon>Bacteria</taxon>
        <taxon>Pseudomonadati</taxon>
        <taxon>Campylobacterota</taxon>
        <taxon>Epsilonproteobacteria</taxon>
        <taxon>Campylobacterales</taxon>
        <taxon>Helicobacteraceae</taxon>
        <taxon>Helicobacter</taxon>
    </lineage>
</organism>